<sequence length="272" mass="30980">MKNIRHIYYVSENTGLLAKDSGKSLLCQFPGVEFQEELLPFIRTKDDAQRTINAIREKCGEEKPIIFSTIFDPEINKILQHEDVILLNICEPFLTQLEGMLGKNALRASGHSRNVDQQIMSNRVDAIHYTISHDDGTAIMDYEEADLIIVGVSRSGKTPISVFLATQMGIKTANYPLVEQDLTFCQLPEDIIKNKHKVVGLSISPDVLHTFREQRYKGSHYAQMSTCKRETLQSKRIFEKYDLPVVFSDARSIEETATQVAQELSKQWNPIF</sequence>
<keyword id="KW-0418">Kinase</keyword>
<keyword id="KW-0547">Nucleotide-binding</keyword>
<keyword id="KW-1185">Reference proteome</keyword>
<keyword id="KW-0723">Serine/threonine-protein kinase</keyword>
<keyword id="KW-0808">Transferase</keyword>
<comment type="function">
    <text evidence="1">Bifunctional serine/threonine kinase and phosphorylase involved in the regulation of the phosphoenolpyruvate synthase (PEPS) by catalyzing its phosphorylation/dephosphorylation.</text>
</comment>
<comment type="catalytic activity">
    <reaction evidence="1">
        <text>[pyruvate, water dikinase] + ADP = [pyruvate, water dikinase]-phosphate + AMP + H(+)</text>
        <dbReference type="Rhea" id="RHEA:46020"/>
        <dbReference type="Rhea" id="RHEA-COMP:11425"/>
        <dbReference type="Rhea" id="RHEA-COMP:11426"/>
        <dbReference type="ChEBI" id="CHEBI:15378"/>
        <dbReference type="ChEBI" id="CHEBI:43176"/>
        <dbReference type="ChEBI" id="CHEBI:68546"/>
        <dbReference type="ChEBI" id="CHEBI:456215"/>
        <dbReference type="ChEBI" id="CHEBI:456216"/>
        <dbReference type="EC" id="2.7.11.33"/>
    </reaction>
</comment>
<comment type="catalytic activity">
    <reaction evidence="1">
        <text>[pyruvate, water dikinase]-phosphate + phosphate + H(+) = [pyruvate, water dikinase] + diphosphate</text>
        <dbReference type="Rhea" id="RHEA:48580"/>
        <dbReference type="Rhea" id="RHEA-COMP:11425"/>
        <dbReference type="Rhea" id="RHEA-COMP:11426"/>
        <dbReference type="ChEBI" id="CHEBI:15378"/>
        <dbReference type="ChEBI" id="CHEBI:33019"/>
        <dbReference type="ChEBI" id="CHEBI:43176"/>
        <dbReference type="ChEBI" id="CHEBI:43474"/>
        <dbReference type="ChEBI" id="CHEBI:68546"/>
        <dbReference type="EC" id="2.7.4.28"/>
    </reaction>
</comment>
<comment type="similarity">
    <text evidence="1">Belongs to the pyruvate, phosphate/water dikinase regulatory protein family. PSRP subfamily.</text>
</comment>
<name>PSRP_DESPS</name>
<dbReference type="EC" id="2.7.11.33" evidence="1"/>
<dbReference type="EC" id="2.7.4.28" evidence="1"/>
<dbReference type="EMBL" id="CR522870">
    <property type="protein sequence ID" value="CAG37258.1"/>
    <property type="molecule type" value="Genomic_DNA"/>
</dbReference>
<dbReference type="RefSeq" id="WP_011189770.1">
    <property type="nucleotide sequence ID" value="NC_006138.1"/>
</dbReference>
<dbReference type="SMR" id="Q6AK68"/>
<dbReference type="STRING" id="177439.DP2529"/>
<dbReference type="DNASU" id="2945459"/>
<dbReference type="KEGG" id="dps:DP2529"/>
<dbReference type="eggNOG" id="COG1806">
    <property type="taxonomic scope" value="Bacteria"/>
</dbReference>
<dbReference type="HOGENOM" id="CLU_046206_1_0_7"/>
<dbReference type="OrthoDB" id="9782201at2"/>
<dbReference type="Proteomes" id="UP000000602">
    <property type="component" value="Chromosome"/>
</dbReference>
<dbReference type="GO" id="GO:0043531">
    <property type="term" value="F:ADP binding"/>
    <property type="evidence" value="ECO:0007669"/>
    <property type="project" value="UniProtKB-UniRule"/>
</dbReference>
<dbReference type="GO" id="GO:0005524">
    <property type="term" value="F:ATP binding"/>
    <property type="evidence" value="ECO:0007669"/>
    <property type="project" value="InterPro"/>
</dbReference>
<dbReference type="GO" id="GO:0016776">
    <property type="term" value="F:phosphotransferase activity, phosphate group as acceptor"/>
    <property type="evidence" value="ECO:0007669"/>
    <property type="project" value="UniProtKB-UniRule"/>
</dbReference>
<dbReference type="GO" id="GO:0004674">
    <property type="term" value="F:protein serine/threonine kinase activity"/>
    <property type="evidence" value="ECO:0007669"/>
    <property type="project" value="UniProtKB-UniRule"/>
</dbReference>
<dbReference type="HAMAP" id="MF_01062">
    <property type="entry name" value="PSRP"/>
    <property type="match status" value="1"/>
</dbReference>
<dbReference type="InterPro" id="IPR005177">
    <property type="entry name" value="Kinase-pyrophosphorylase"/>
</dbReference>
<dbReference type="InterPro" id="IPR026530">
    <property type="entry name" value="PSRP"/>
</dbReference>
<dbReference type="NCBIfam" id="NF003742">
    <property type="entry name" value="PRK05339.1"/>
    <property type="match status" value="1"/>
</dbReference>
<dbReference type="PANTHER" id="PTHR31756">
    <property type="entry name" value="PYRUVATE, PHOSPHATE DIKINASE REGULATORY PROTEIN 1, CHLOROPLASTIC"/>
    <property type="match status" value="1"/>
</dbReference>
<dbReference type="PANTHER" id="PTHR31756:SF3">
    <property type="entry name" value="PYRUVATE, PHOSPHATE DIKINASE REGULATORY PROTEIN 1, CHLOROPLASTIC"/>
    <property type="match status" value="1"/>
</dbReference>
<dbReference type="Pfam" id="PF03618">
    <property type="entry name" value="Kinase-PPPase"/>
    <property type="match status" value="1"/>
</dbReference>
<gene>
    <name type="ordered locus">DP2529</name>
</gene>
<organism>
    <name type="scientific">Desulfotalea psychrophila (strain LSv54 / DSM 12343)</name>
    <dbReference type="NCBI Taxonomy" id="177439"/>
    <lineage>
        <taxon>Bacteria</taxon>
        <taxon>Pseudomonadati</taxon>
        <taxon>Thermodesulfobacteriota</taxon>
        <taxon>Desulfobulbia</taxon>
        <taxon>Desulfobulbales</taxon>
        <taxon>Desulfocapsaceae</taxon>
        <taxon>Desulfotalea</taxon>
    </lineage>
</organism>
<evidence type="ECO:0000255" key="1">
    <source>
        <dbReference type="HAMAP-Rule" id="MF_01062"/>
    </source>
</evidence>
<reference key="1">
    <citation type="journal article" date="2004" name="Environ. Microbiol.">
        <title>The genome of Desulfotalea psychrophila, a sulfate-reducing bacterium from permanently cold Arctic sediments.</title>
        <authorList>
            <person name="Rabus R."/>
            <person name="Ruepp A."/>
            <person name="Frickey T."/>
            <person name="Rattei T."/>
            <person name="Fartmann B."/>
            <person name="Stark M."/>
            <person name="Bauer M."/>
            <person name="Zibat A."/>
            <person name="Lombardot T."/>
            <person name="Becker I."/>
            <person name="Amann J."/>
            <person name="Gellner K."/>
            <person name="Teeling H."/>
            <person name="Leuschner W.D."/>
            <person name="Gloeckner F.-O."/>
            <person name="Lupas A.N."/>
            <person name="Amann R."/>
            <person name="Klenk H.-P."/>
        </authorList>
    </citation>
    <scope>NUCLEOTIDE SEQUENCE [LARGE SCALE GENOMIC DNA]</scope>
    <source>
        <strain>DSM 12343 / LSv54</strain>
    </source>
</reference>
<proteinExistence type="inferred from homology"/>
<feature type="chain" id="PRO_0000196651" description="Putative phosphoenolpyruvate synthase regulatory protein">
    <location>
        <begin position="1"/>
        <end position="272"/>
    </location>
</feature>
<feature type="binding site" evidence="1">
    <location>
        <begin position="151"/>
        <end position="158"/>
    </location>
    <ligand>
        <name>ADP</name>
        <dbReference type="ChEBI" id="CHEBI:456216"/>
    </ligand>
</feature>
<accession>Q6AK68</accession>
<protein>
    <recommendedName>
        <fullName evidence="1">Putative phosphoenolpyruvate synthase regulatory protein</fullName>
        <shortName evidence="1">PEP synthase regulatory protein</shortName>
        <shortName evidence="1">PSRP</shortName>
        <ecNumber evidence="1">2.7.11.33</ecNumber>
        <ecNumber evidence="1">2.7.4.28</ecNumber>
    </recommendedName>
    <alternativeName>
        <fullName evidence="1">Pyruvate, water dikinase regulatory protein</fullName>
    </alternativeName>
</protein>